<proteinExistence type="inferred from homology"/>
<gene>
    <name type="ordered locus">STER_0310</name>
</gene>
<comment type="function">
    <text evidence="1">Could be involved in insertion of integral membrane proteins into the membrane.</text>
</comment>
<comment type="subcellular location">
    <subcellularLocation>
        <location evidence="1">Cell membrane</location>
        <topology evidence="1">Peripheral membrane protein</topology>
        <orientation evidence="1">Cytoplasmic side</orientation>
    </subcellularLocation>
</comment>
<comment type="similarity">
    <text evidence="1">Belongs to the UPF0161 family.</text>
</comment>
<keyword id="KW-1003">Cell membrane</keyword>
<keyword id="KW-0472">Membrane</keyword>
<accession>Q03MF3</accession>
<protein>
    <recommendedName>
        <fullName evidence="1">Putative membrane protein insertion efficiency factor</fullName>
    </recommendedName>
</protein>
<organism>
    <name type="scientific">Streptococcus thermophilus (strain ATCC BAA-491 / LMD-9)</name>
    <dbReference type="NCBI Taxonomy" id="322159"/>
    <lineage>
        <taxon>Bacteria</taxon>
        <taxon>Bacillati</taxon>
        <taxon>Bacillota</taxon>
        <taxon>Bacilli</taxon>
        <taxon>Lactobacillales</taxon>
        <taxon>Streptococcaceae</taxon>
        <taxon>Streptococcus</taxon>
    </lineage>
</organism>
<evidence type="ECO:0000255" key="1">
    <source>
        <dbReference type="HAMAP-Rule" id="MF_00386"/>
    </source>
</evidence>
<name>YIDD_STRTD</name>
<reference key="1">
    <citation type="journal article" date="2006" name="Proc. Natl. Acad. Sci. U.S.A.">
        <title>Comparative genomics of the lactic acid bacteria.</title>
        <authorList>
            <person name="Makarova K.S."/>
            <person name="Slesarev A."/>
            <person name="Wolf Y.I."/>
            <person name="Sorokin A."/>
            <person name="Mirkin B."/>
            <person name="Koonin E.V."/>
            <person name="Pavlov A."/>
            <person name="Pavlova N."/>
            <person name="Karamychev V."/>
            <person name="Polouchine N."/>
            <person name="Shakhova V."/>
            <person name="Grigoriev I."/>
            <person name="Lou Y."/>
            <person name="Rohksar D."/>
            <person name="Lucas S."/>
            <person name="Huang K."/>
            <person name="Goodstein D.M."/>
            <person name="Hawkins T."/>
            <person name="Plengvidhya V."/>
            <person name="Welker D."/>
            <person name="Hughes J."/>
            <person name="Goh Y."/>
            <person name="Benson A."/>
            <person name="Baldwin K."/>
            <person name="Lee J.-H."/>
            <person name="Diaz-Muniz I."/>
            <person name="Dosti B."/>
            <person name="Smeianov V."/>
            <person name="Wechter W."/>
            <person name="Barabote R."/>
            <person name="Lorca G."/>
            <person name="Altermann E."/>
            <person name="Barrangou R."/>
            <person name="Ganesan B."/>
            <person name="Xie Y."/>
            <person name="Rawsthorne H."/>
            <person name="Tamir D."/>
            <person name="Parker C."/>
            <person name="Breidt F."/>
            <person name="Broadbent J.R."/>
            <person name="Hutkins R."/>
            <person name="O'Sullivan D."/>
            <person name="Steele J."/>
            <person name="Unlu G."/>
            <person name="Saier M.H. Jr."/>
            <person name="Klaenhammer T."/>
            <person name="Richardson P."/>
            <person name="Kozyavkin S."/>
            <person name="Weimer B.C."/>
            <person name="Mills D.A."/>
        </authorList>
    </citation>
    <scope>NUCLEOTIDE SEQUENCE [LARGE SCALE GENOMIC DNA]</scope>
    <source>
        <strain>ATCC BAA-491 / LMD-9</strain>
    </source>
</reference>
<feature type="chain" id="PRO_1000013137" description="Putative membrane protein insertion efficiency factor">
    <location>
        <begin position="1"/>
        <end position="82"/>
    </location>
</feature>
<dbReference type="EMBL" id="CP000419">
    <property type="protein sequence ID" value="ABJ65619.1"/>
    <property type="molecule type" value="Genomic_DNA"/>
</dbReference>
<dbReference type="KEGG" id="ste:STER_0310"/>
<dbReference type="HOGENOM" id="CLU_144811_5_2_9"/>
<dbReference type="GO" id="GO:0005886">
    <property type="term" value="C:plasma membrane"/>
    <property type="evidence" value="ECO:0007669"/>
    <property type="project" value="UniProtKB-SubCell"/>
</dbReference>
<dbReference type="HAMAP" id="MF_00386">
    <property type="entry name" value="UPF0161_YidD"/>
    <property type="match status" value="1"/>
</dbReference>
<dbReference type="InterPro" id="IPR002696">
    <property type="entry name" value="Membr_insert_effic_factor_YidD"/>
</dbReference>
<dbReference type="NCBIfam" id="TIGR00278">
    <property type="entry name" value="membrane protein insertion efficiency factor YidD"/>
    <property type="match status" value="1"/>
</dbReference>
<dbReference type="PANTHER" id="PTHR33383">
    <property type="entry name" value="MEMBRANE PROTEIN INSERTION EFFICIENCY FACTOR-RELATED"/>
    <property type="match status" value="1"/>
</dbReference>
<dbReference type="PANTHER" id="PTHR33383:SF1">
    <property type="entry name" value="MEMBRANE PROTEIN INSERTION EFFICIENCY FACTOR-RELATED"/>
    <property type="match status" value="1"/>
</dbReference>
<dbReference type="Pfam" id="PF01809">
    <property type="entry name" value="YidD"/>
    <property type="match status" value="1"/>
</dbReference>
<dbReference type="SMART" id="SM01234">
    <property type="entry name" value="Haemolytic"/>
    <property type="match status" value="1"/>
</dbReference>
<sequence>MKKFLIALVKAYQRWISPLFPLSCRFCPTCSVYMIQAIEKHGLKGVLMGIARILRCHPLSETGDDPVPDYFSLKRKKTPLDN</sequence>